<dbReference type="EMBL" id="AL096692">
    <property type="status" value="NOT_ANNOTATED_CDS"/>
    <property type="molecule type" value="Genomic_DNA"/>
</dbReference>
<dbReference type="EMBL" id="AL161574">
    <property type="protein sequence ID" value="CAB79688.1"/>
    <property type="status" value="ALT_SEQ"/>
    <property type="molecule type" value="Genomic_DNA"/>
</dbReference>
<dbReference type="EMBL" id="CP002687">
    <property type="protein sequence ID" value="AEE85615.1"/>
    <property type="molecule type" value="Genomic_DNA"/>
</dbReference>
<dbReference type="EMBL" id="BX828695">
    <property type="status" value="NOT_ANNOTATED_CDS"/>
    <property type="molecule type" value="mRNA"/>
</dbReference>
<dbReference type="PIR" id="T13448">
    <property type="entry name" value="T13448"/>
</dbReference>
<dbReference type="RefSeq" id="NP_194659.2">
    <property type="nucleotide sequence ID" value="NM_119075.2"/>
</dbReference>
<dbReference type="PaxDb" id="3702-AT4G29300.1"/>
<dbReference type="EnsemblPlants" id="AT4G29300.1">
    <property type="protein sequence ID" value="AT4G29300.1"/>
    <property type="gene ID" value="AT4G29300"/>
</dbReference>
<dbReference type="GeneID" id="829052"/>
<dbReference type="Gramene" id="AT4G29300.1">
    <property type="protein sequence ID" value="AT4G29300.1"/>
    <property type="gene ID" value="AT4G29300"/>
</dbReference>
<dbReference type="KEGG" id="ath:AT4G29300"/>
<dbReference type="Araport" id="AT4G29300"/>
<dbReference type="TAIR" id="AT4G29300">
    <property type="gene designation" value="LCR27"/>
</dbReference>
<dbReference type="HOGENOM" id="CLU_182511_1_0_1"/>
<dbReference type="InParanoid" id="Q9M0F1"/>
<dbReference type="OMA" id="ECRLTID"/>
<dbReference type="OrthoDB" id="1025111at2759"/>
<dbReference type="PhylomeDB" id="Q9M0F1"/>
<dbReference type="PRO" id="PR:Q9M0F1"/>
<dbReference type="Proteomes" id="UP000006548">
    <property type="component" value="Chromosome 4"/>
</dbReference>
<dbReference type="ExpressionAtlas" id="Q9M0F1">
    <property type="expression patterns" value="baseline and differential"/>
</dbReference>
<dbReference type="GO" id="GO:0005576">
    <property type="term" value="C:extracellular region"/>
    <property type="evidence" value="ECO:0007669"/>
    <property type="project" value="UniProtKB-SubCell"/>
</dbReference>
<dbReference type="GO" id="GO:0050832">
    <property type="term" value="P:defense response to fungus"/>
    <property type="evidence" value="ECO:0007669"/>
    <property type="project" value="UniProtKB-KW"/>
</dbReference>
<dbReference type="GO" id="GO:0031640">
    <property type="term" value="P:killing of cells of another organism"/>
    <property type="evidence" value="ECO:0007669"/>
    <property type="project" value="UniProtKB-KW"/>
</dbReference>
<dbReference type="InterPro" id="IPR010851">
    <property type="entry name" value="DEFL"/>
</dbReference>
<dbReference type="PANTHER" id="PTHR33830:SF23">
    <property type="entry name" value="DEFENSIN-LIKE PROTEIN 159-RELATED"/>
    <property type="match status" value="1"/>
</dbReference>
<dbReference type="PANTHER" id="PTHR33830">
    <property type="entry name" value="DEFENSIN-LIKE PROTEIN 184-RELATED"/>
    <property type="match status" value="1"/>
</dbReference>
<dbReference type="Pfam" id="PF07333">
    <property type="entry name" value="SLR1-BP"/>
    <property type="match status" value="1"/>
</dbReference>
<comment type="subcellular location">
    <subcellularLocation>
        <location evidence="1">Secreted</location>
    </subcellularLocation>
</comment>
<comment type="similarity">
    <text evidence="3">Belongs to the DEFL family.</text>
</comment>
<comment type="sequence caution" evidence="3">
    <conflict type="erroneous gene model prediction">
        <sequence resource="EMBL-CDS" id="CAB79688"/>
    </conflict>
</comment>
<feature type="signal peptide" evidence="2">
    <location>
        <begin position="1"/>
        <end position="27"/>
    </location>
</feature>
<feature type="chain" id="PRO_0000206206" description="Defensin-like protein 161">
    <location>
        <begin position="28"/>
        <end position="77"/>
    </location>
</feature>
<feature type="disulfide bond" evidence="1">
    <location>
        <begin position="30"/>
        <end position="77"/>
    </location>
</feature>
<feature type="disulfide bond" evidence="1">
    <location>
        <begin position="40"/>
        <end position="59"/>
    </location>
</feature>
<feature type="disulfide bond" evidence="1">
    <location>
        <begin position="45"/>
        <end position="71"/>
    </location>
</feature>
<feature type="disulfide bond" evidence="1">
    <location>
        <begin position="49"/>
        <end position="73"/>
    </location>
</feature>
<reference key="1">
    <citation type="journal article" date="1999" name="Nature">
        <title>Sequence and analysis of chromosome 4 of the plant Arabidopsis thaliana.</title>
        <authorList>
            <person name="Mayer K.F.X."/>
            <person name="Schueller C."/>
            <person name="Wambutt R."/>
            <person name="Murphy G."/>
            <person name="Volckaert G."/>
            <person name="Pohl T."/>
            <person name="Duesterhoeft A."/>
            <person name="Stiekema W."/>
            <person name="Entian K.-D."/>
            <person name="Terryn N."/>
            <person name="Harris B."/>
            <person name="Ansorge W."/>
            <person name="Brandt P."/>
            <person name="Grivell L.A."/>
            <person name="Rieger M."/>
            <person name="Weichselgartner M."/>
            <person name="de Simone V."/>
            <person name="Obermaier B."/>
            <person name="Mache R."/>
            <person name="Mueller M."/>
            <person name="Kreis M."/>
            <person name="Delseny M."/>
            <person name="Puigdomenech P."/>
            <person name="Watson M."/>
            <person name="Schmidtheini T."/>
            <person name="Reichert B."/>
            <person name="Portetelle D."/>
            <person name="Perez-Alonso M."/>
            <person name="Boutry M."/>
            <person name="Bancroft I."/>
            <person name="Vos P."/>
            <person name="Hoheisel J."/>
            <person name="Zimmermann W."/>
            <person name="Wedler H."/>
            <person name="Ridley P."/>
            <person name="Langham S.-A."/>
            <person name="McCullagh B."/>
            <person name="Bilham L."/>
            <person name="Robben J."/>
            <person name="van der Schueren J."/>
            <person name="Grymonprez B."/>
            <person name="Chuang Y.-J."/>
            <person name="Vandenbussche F."/>
            <person name="Braeken M."/>
            <person name="Weltjens I."/>
            <person name="Voet M."/>
            <person name="Bastiaens I."/>
            <person name="Aert R."/>
            <person name="Defoor E."/>
            <person name="Weitzenegger T."/>
            <person name="Bothe G."/>
            <person name="Ramsperger U."/>
            <person name="Hilbert H."/>
            <person name="Braun M."/>
            <person name="Holzer E."/>
            <person name="Brandt A."/>
            <person name="Peters S."/>
            <person name="van Staveren M."/>
            <person name="Dirkse W."/>
            <person name="Mooijman P."/>
            <person name="Klein Lankhorst R."/>
            <person name="Rose M."/>
            <person name="Hauf J."/>
            <person name="Koetter P."/>
            <person name="Berneiser S."/>
            <person name="Hempel S."/>
            <person name="Feldpausch M."/>
            <person name="Lamberth S."/>
            <person name="Van den Daele H."/>
            <person name="De Keyser A."/>
            <person name="Buysshaert C."/>
            <person name="Gielen J."/>
            <person name="Villarroel R."/>
            <person name="De Clercq R."/>
            <person name="van Montagu M."/>
            <person name="Rogers J."/>
            <person name="Cronin A."/>
            <person name="Quail M.A."/>
            <person name="Bray-Allen S."/>
            <person name="Clark L."/>
            <person name="Doggett J."/>
            <person name="Hall S."/>
            <person name="Kay M."/>
            <person name="Lennard N."/>
            <person name="McLay K."/>
            <person name="Mayes R."/>
            <person name="Pettett A."/>
            <person name="Rajandream M.A."/>
            <person name="Lyne M."/>
            <person name="Benes V."/>
            <person name="Rechmann S."/>
            <person name="Borkova D."/>
            <person name="Bloecker H."/>
            <person name="Scharfe M."/>
            <person name="Grimm M."/>
            <person name="Loehnert T.-H."/>
            <person name="Dose S."/>
            <person name="de Haan M."/>
            <person name="Maarse A.C."/>
            <person name="Schaefer M."/>
            <person name="Mueller-Auer S."/>
            <person name="Gabel C."/>
            <person name="Fuchs M."/>
            <person name="Fartmann B."/>
            <person name="Granderath K."/>
            <person name="Dauner D."/>
            <person name="Herzl A."/>
            <person name="Neumann S."/>
            <person name="Argiriou A."/>
            <person name="Vitale D."/>
            <person name="Liguori R."/>
            <person name="Piravandi E."/>
            <person name="Massenet O."/>
            <person name="Quigley F."/>
            <person name="Clabauld G."/>
            <person name="Muendlein A."/>
            <person name="Felber R."/>
            <person name="Schnabl S."/>
            <person name="Hiller R."/>
            <person name="Schmidt W."/>
            <person name="Lecharny A."/>
            <person name="Aubourg S."/>
            <person name="Chefdor F."/>
            <person name="Cooke R."/>
            <person name="Berger C."/>
            <person name="Monfort A."/>
            <person name="Casacuberta E."/>
            <person name="Gibbons T."/>
            <person name="Weber N."/>
            <person name="Vandenbol M."/>
            <person name="Bargues M."/>
            <person name="Terol J."/>
            <person name="Torres A."/>
            <person name="Perez-Perez A."/>
            <person name="Purnelle B."/>
            <person name="Bent E."/>
            <person name="Johnson S."/>
            <person name="Tacon D."/>
            <person name="Jesse T."/>
            <person name="Heijnen L."/>
            <person name="Schwarz S."/>
            <person name="Scholler P."/>
            <person name="Heber S."/>
            <person name="Francs P."/>
            <person name="Bielke C."/>
            <person name="Frishman D."/>
            <person name="Haase D."/>
            <person name="Lemcke K."/>
            <person name="Mewes H.-W."/>
            <person name="Stocker S."/>
            <person name="Zaccaria P."/>
            <person name="Bevan M."/>
            <person name="Wilson R.K."/>
            <person name="de la Bastide M."/>
            <person name="Habermann K."/>
            <person name="Parnell L."/>
            <person name="Dedhia N."/>
            <person name="Gnoj L."/>
            <person name="Schutz K."/>
            <person name="Huang E."/>
            <person name="Spiegel L."/>
            <person name="Sekhon M."/>
            <person name="Murray J."/>
            <person name="Sheet P."/>
            <person name="Cordes M."/>
            <person name="Abu-Threideh J."/>
            <person name="Stoneking T."/>
            <person name="Kalicki J."/>
            <person name="Graves T."/>
            <person name="Harmon G."/>
            <person name="Edwards J."/>
            <person name="Latreille P."/>
            <person name="Courtney L."/>
            <person name="Cloud J."/>
            <person name="Abbott A."/>
            <person name="Scott K."/>
            <person name="Johnson D."/>
            <person name="Minx P."/>
            <person name="Bentley D."/>
            <person name="Fulton B."/>
            <person name="Miller N."/>
            <person name="Greco T."/>
            <person name="Kemp K."/>
            <person name="Kramer J."/>
            <person name="Fulton L."/>
            <person name="Mardis E."/>
            <person name="Dante M."/>
            <person name="Pepin K."/>
            <person name="Hillier L.W."/>
            <person name="Nelson J."/>
            <person name="Spieth J."/>
            <person name="Ryan E."/>
            <person name="Andrews S."/>
            <person name="Geisel C."/>
            <person name="Layman D."/>
            <person name="Du H."/>
            <person name="Ali J."/>
            <person name="Berghoff A."/>
            <person name="Jones K."/>
            <person name="Drone K."/>
            <person name="Cotton M."/>
            <person name="Joshu C."/>
            <person name="Antonoiu B."/>
            <person name="Zidanic M."/>
            <person name="Strong C."/>
            <person name="Sun H."/>
            <person name="Lamar B."/>
            <person name="Yordan C."/>
            <person name="Ma P."/>
            <person name="Zhong J."/>
            <person name="Preston R."/>
            <person name="Vil D."/>
            <person name="Shekher M."/>
            <person name="Matero A."/>
            <person name="Shah R."/>
            <person name="Swaby I.K."/>
            <person name="O'Shaughnessy A."/>
            <person name="Rodriguez M."/>
            <person name="Hoffman J."/>
            <person name="Till S."/>
            <person name="Granat S."/>
            <person name="Shohdy N."/>
            <person name="Hasegawa A."/>
            <person name="Hameed A."/>
            <person name="Lodhi M."/>
            <person name="Johnson A."/>
            <person name="Chen E."/>
            <person name="Marra M.A."/>
            <person name="Martienssen R."/>
            <person name="McCombie W.R."/>
        </authorList>
    </citation>
    <scope>NUCLEOTIDE SEQUENCE [LARGE SCALE GENOMIC DNA]</scope>
    <source>
        <strain>cv. Columbia</strain>
    </source>
</reference>
<reference key="2">
    <citation type="journal article" date="2017" name="Plant J.">
        <title>Araport11: a complete reannotation of the Arabidopsis thaliana reference genome.</title>
        <authorList>
            <person name="Cheng C.Y."/>
            <person name="Krishnakumar V."/>
            <person name="Chan A.P."/>
            <person name="Thibaud-Nissen F."/>
            <person name="Schobel S."/>
            <person name="Town C.D."/>
        </authorList>
    </citation>
    <scope>GENOME REANNOTATION</scope>
    <source>
        <strain>cv. Columbia</strain>
    </source>
</reference>
<reference key="3">
    <citation type="journal article" date="2004" name="Genome Res.">
        <title>Whole genome sequence comparisons and 'full-length' cDNA sequences: a combined approach to evaluate and improve Arabidopsis genome annotation.</title>
        <authorList>
            <person name="Castelli V."/>
            <person name="Aury J.-M."/>
            <person name="Jaillon O."/>
            <person name="Wincker P."/>
            <person name="Clepet C."/>
            <person name="Menard M."/>
            <person name="Cruaud C."/>
            <person name="Quetier F."/>
            <person name="Scarpelli C."/>
            <person name="Schaechter V."/>
            <person name="Temple G."/>
            <person name="Caboche M."/>
            <person name="Weissenbach J."/>
            <person name="Salanoubat M."/>
        </authorList>
    </citation>
    <scope>NUCLEOTIDE SEQUENCE [LARGE SCALE MRNA]</scope>
    <source>
        <strain>cv. Columbia</strain>
    </source>
</reference>
<reference key="4">
    <citation type="journal article" date="2001" name="Plant Mol. Biol.">
        <title>Two large Arabidopsis thaliana gene families are homologous to the Brassica gene superfamily that encodes pollen coat proteins and the male component of the self-incompatibility response.</title>
        <authorList>
            <person name="Vanoosthuyse V."/>
            <person name="Miege C."/>
            <person name="Dumas C."/>
            <person name="Cock J.M."/>
        </authorList>
    </citation>
    <scope>IDENTIFICATION</scope>
</reference>
<reference key="5">
    <citation type="journal article" date="2005" name="Plant Physiol.">
        <title>Genome organization of more than 300 defensin-like genes in Arabidopsis.</title>
        <authorList>
            <person name="Silverstein K.A.T."/>
            <person name="Graham M.A."/>
            <person name="Paape T.D."/>
            <person name="VandenBosch K.A."/>
        </authorList>
    </citation>
    <scope>GENE FAMILY</scope>
</reference>
<name>DF161_ARATH</name>
<gene>
    <name type="primary">LCR27</name>
    <name type="ordered locus">At4g29300</name>
    <name type="ORF">F17A13.120</name>
</gene>
<keyword id="KW-0929">Antimicrobial</keyword>
<keyword id="KW-1015">Disulfide bond</keyword>
<keyword id="KW-0295">Fungicide</keyword>
<keyword id="KW-0611">Plant defense</keyword>
<keyword id="KW-1185">Reference proteome</keyword>
<keyword id="KW-0964">Secreted</keyword>
<keyword id="KW-0732">Signal</keyword>
<proteinExistence type="inferred from homology"/>
<sequence length="77" mass="8511">MAKLSCSYLLVFMLVFSAILMVEKVEGEECRLTIDKATPCHLSDCRLSCYTGYNGVGECFDDPNVPGPDNCGCRYNC</sequence>
<protein>
    <recommendedName>
        <fullName>Defensin-like protein 161</fullName>
    </recommendedName>
    <alternativeName>
        <fullName>Low-molecular-weight cysteine-rich protein 27</fullName>
        <shortName>Protein LCR27</shortName>
    </alternativeName>
</protein>
<organism>
    <name type="scientific">Arabidopsis thaliana</name>
    <name type="common">Mouse-ear cress</name>
    <dbReference type="NCBI Taxonomy" id="3702"/>
    <lineage>
        <taxon>Eukaryota</taxon>
        <taxon>Viridiplantae</taxon>
        <taxon>Streptophyta</taxon>
        <taxon>Embryophyta</taxon>
        <taxon>Tracheophyta</taxon>
        <taxon>Spermatophyta</taxon>
        <taxon>Magnoliopsida</taxon>
        <taxon>eudicotyledons</taxon>
        <taxon>Gunneridae</taxon>
        <taxon>Pentapetalae</taxon>
        <taxon>rosids</taxon>
        <taxon>malvids</taxon>
        <taxon>Brassicales</taxon>
        <taxon>Brassicaceae</taxon>
        <taxon>Camelineae</taxon>
        <taxon>Arabidopsis</taxon>
    </lineage>
</organism>
<accession>Q9M0F1</accession>
<evidence type="ECO:0000250" key="1"/>
<evidence type="ECO:0000255" key="2"/>
<evidence type="ECO:0000305" key="3"/>